<dbReference type="EMBL" id="AF134120">
    <property type="protein sequence ID" value="AAD28767.1"/>
    <property type="molecule type" value="mRNA"/>
</dbReference>
<dbReference type="EMBL" id="AL132962">
    <property type="protein sequence ID" value="CAB71077.1"/>
    <property type="molecule type" value="Genomic_DNA"/>
</dbReference>
<dbReference type="EMBL" id="CP002686">
    <property type="protein sequence ID" value="AEE80209.1"/>
    <property type="molecule type" value="Genomic_DNA"/>
</dbReference>
<dbReference type="EMBL" id="AY054670">
    <property type="protein sequence ID" value="AAK96861.1"/>
    <property type="molecule type" value="mRNA"/>
</dbReference>
<dbReference type="EMBL" id="AY065429">
    <property type="protein sequence ID" value="AAL38870.1"/>
    <property type="molecule type" value="mRNA"/>
</dbReference>
<dbReference type="EMBL" id="AY072483">
    <property type="protein sequence ID" value="AAL66898.1"/>
    <property type="molecule type" value="mRNA"/>
</dbReference>
<dbReference type="EMBL" id="BT002070">
    <property type="protein sequence ID" value="AAN72081.1"/>
    <property type="molecule type" value="mRNA"/>
</dbReference>
<dbReference type="PIR" id="T47939">
    <property type="entry name" value="T47939"/>
</dbReference>
<dbReference type="PIR" id="T50550">
    <property type="entry name" value="T50550"/>
</dbReference>
<dbReference type="RefSeq" id="NP_191706.2">
    <property type="nucleotide sequence ID" value="NM_116012.5"/>
</dbReference>
<dbReference type="PDB" id="7WFE">
    <property type="method" value="EM"/>
    <property type="resolution" value="3.25 A"/>
    <property type="chains" value="B2=1-257"/>
</dbReference>
<dbReference type="PDB" id="7WG5">
    <property type="method" value="EM"/>
    <property type="resolution" value="3.89 A"/>
    <property type="chains" value="B2=1-257"/>
</dbReference>
<dbReference type="PDB" id="8J6Z">
    <property type="method" value="EM"/>
    <property type="resolution" value="2.79 A"/>
    <property type="chains" value="2=1-257"/>
</dbReference>
<dbReference type="PDB" id="8J7A">
    <property type="method" value="EM"/>
    <property type="resolution" value="3.06 A"/>
    <property type="chains" value="2=1-257"/>
</dbReference>
<dbReference type="PDB" id="8J7B">
    <property type="method" value="EM"/>
    <property type="resolution" value="3.22 A"/>
    <property type="chains" value="2=1-257"/>
</dbReference>
<dbReference type="PDBsum" id="7WFE"/>
<dbReference type="PDBsum" id="7WG5"/>
<dbReference type="PDBsum" id="8J6Z"/>
<dbReference type="PDBsum" id="8J7A"/>
<dbReference type="PDBsum" id="8J7B"/>
<dbReference type="EMDB" id="EMD-32463"/>
<dbReference type="EMDB" id="EMD-32477"/>
<dbReference type="EMDB" id="EMD-36021"/>
<dbReference type="EMDB" id="EMD-36036"/>
<dbReference type="EMDB" id="EMD-36037"/>
<dbReference type="SMR" id="Q9SYW8"/>
<dbReference type="FunCoup" id="Q9SYW8">
    <property type="interactions" value="967"/>
</dbReference>
<dbReference type="STRING" id="3702.Q9SYW8"/>
<dbReference type="TCDB" id="5.B.4.1.1">
    <property type="family name" value="the plant photosystem i supercomplex (psi) family"/>
</dbReference>
<dbReference type="iPTMnet" id="Q9SYW8"/>
<dbReference type="PaxDb" id="3702-AT3G61470.1"/>
<dbReference type="ProteomicsDB" id="238465"/>
<dbReference type="EnsemblPlants" id="AT3G61470.1">
    <property type="protein sequence ID" value="AT3G61470.1"/>
    <property type="gene ID" value="AT3G61470"/>
</dbReference>
<dbReference type="GeneID" id="825320"/>
<dbReference type="Gramene" id="AT3G61470.1">
    <property type="protein sequence ID" value="AT3G61470.1"/>
    <property type="gene ID" value="AT3G61470"/>
</dbReference>
<dbReference type="KEGG" id="ath:AT3G61470"/>
<dbReference type="Araport" id="AT3G61470"/>
<dbReference type="TAIR" id="AT3G61470">
    <property type="gene designation" value="LHCA2"/>
</dbReference>
<dbReference type="eggNOG" id="ENOG502SBWS">
    <property type="taxonomic scope" value="Eukaryota"/>
</dbReference>
<dbReference type="HOGENOM" id="CLU_057943_6_0_1"/>
<dbReference type="InParanoid" id="Q9SYW8"/>
<dbReference type="OMA" id="GHNTIFS"/>
<dbReference type="OrthoDB" id="423598at2759"/>
<dbReference type="PhylomeDB" id="Q9SYW8"/>
<dbReference type="CD-CODE" id="4299E36E">
    <property type="entry name" value="Nucleolus"/>
</dbReference>
<dbReference type="PRO" id="PR:Q9SYW8"/>
<dbReference type="Proteomes" id="UP000006548">
    <property type="component" value="Chromosome 3"/>
</dbReference>
<dbReference type="ExpressionAtlas" id="Q9SYW8">
    <property type="expression patterns" value="baseline and differential"/>
</dbReference>
<dbReference type="GO" id="GO:0009507">
    <property type="term" value="C:chloroplast"/>
    <property type="evidence" value="ECO:0007005"/>
    <property type="project" value="TAIR"/>
</dbReference>
<dbReference type="GO" id="GO:0009534">
    <property type="term" value="C:chloroplast thylakoid"/>
    <property type="evidence" value="ECO:0007005"/>
    <property type="project" value="TAIR"/>
</dbReference>
<dbReference type="GO" id="GO:0009535">
    <property type="term" value="C:chloroplast thylakoid membrane"/>
    <property type="evidence" value="ECO:0000314"/>
    <property type="project" value="UniProtKB"/>
</dbReference>
<dbReference type="GO" id="GO:0005829">
    <property type="term" value="C:cytosol"/>
    <property type="evidence" value="ECO:0007005"/>
    <property type="project" value="TAIR"/>
</dbReference>
<dbReference type="GO" id="GO:0009522">
    <property type="term" value="C:photosystem I"/>
    <property type="evidence" value="ECO:0007669"/>
    <property type="project" value="UniProtKB-KW"/>
</dbReference>
<dbReference type="GO" id="GO:0009579">
    <property type="term" value="C:thylakoid"/>
    <property type="evidence" value="ECO:0007005"/>
    <property type="project" value="TAIR"/>
</dbReference>
<dbReference type="GO" id="GO:0016168">
    <property type="term" value="F:chlorophyll binding"/>
    <property type="evidence" value="ECO:0000250"/>
    <property type="project" value="TAIR"/>
</dbReference>
<dbReference type="GO" id="GO:0046872">
    <property type="term" value="F:metal ion binding"/>
    <property type="evidence" value="ECO:0007669"/>
    <property type="project" value="UniProtKB-KW"/>
</dbReference>
<dbReference type="GO" id="GO:0019904">
    <property type="term" value="F:protein domain specific binding"/>
    <property type="evidence" value="ECO:0000353"/>
    <property type="project" value="CAFA"/>
</dbReference>
<dbReference type="GO" id="GO:0009768">
    <property type="term" value="P:photosynthesis, light harvesting in photosystem I"/>
    <property type="evidence" value="ECO:0000314"/>
    <property type="project" value="UniProtKB"/>
</dbReference>
<dbReference type="GO" id="GO:0009409">
    <property type="term" value="P:response to cold"/>
    <property type="evidence" value="ECO:0000270"/>
    <property type="project" value="UniProtKB"/>
</dbReference>
<dbReference type="GO" id="GO:0009644">
    <property type="term" value="P:response to high light intensity"/>
    <property type="evidence" value="ECO:0000270"/>
    <property type="project" value="UniProtKB"/>
</dbReference>
<dbReference type="GO" id="GO:0009645">
    <property type="term" value="P:response to low light intensity stimulus"/>
    <property type="evidence" value="ECO:0000270"/>
    <property type="project" value="UniProtKB"/>
</dbReference>
<dbReference type="FunFam" id="1.10.3460.10:FF:000002">
    <property type="entry name" value="Chlorophyll a-b binding protein, chloroplastic"/>
    <property type="match status" value="1"/>
</dbReference>
<dbReference type="Gene3D" id="1.10.3460.10">
    <property type="entry name" value="Chlorophyll a/b binding protein domain"/>
    <property type="match status" value="1"/>
</dbReference>
<dbReference type="InterPro" id="IPR001344">
    <property type="entry name" value="Chloro_AB-bd_pln"/>
</dbReference>
<dbReference type="InterPro" id="IPR022796">
    <property type="entry name" value="Chloroa_b-bind"/>
</dbReference>
<dbReference type="PANTHER" id="PTHR21649">
    <property type="entry name" value="CHLOROPHYLL A/B BINDING PROTEIN"/>
    <property type="match status" value="1"/>
</dbReference>
<dbReference type="Pfam" id="PF00504">
    <property type="entry name" value="Chloroa_b-bind"/>
    <property type="match status" value="1"/>
</dbReference>
<dbReference type="SUPFAM" id="SSF103511">
    <property type="entry name" value="Chlorophyll a-b binding protein"/>
    <property type="match status" value="1"/>
</dbReference>
<name>LHCA2_ARATH</name>
<accession>Q9SYW8</accession>
<accession>Q9M320</accession>
<gene>
    <name evidence="13" type="primary">LHCA2</name>
    <name evidence="15" type="ordered locus">At3g61470</name>
    <name evidence="17" type="ORF">F2A19.70</name>
</gene>
<organism evidence="16">
    <name type="scientific">Arabidopsis thaliana</name>
    <name type="common">Mouse-ear cress</name>
    <dbReference type="NCBI Taxonomy" id="3702"/>
    <lineage>
        <taxon>Eukaryota</taxon>
        <taxon>Viridiplantae</taxon>
        <taxon>Streptophyta</taxon>
        <taxon>Embryophyta</taxon>
        <taxon>Tracheophyta</taxon>
        <taxon>Spermatophyta</taxon>
        <taxon>Magnoliopsida</taxon>
        <taxon>eudicotyledons</taxon>
        <taxon>Gunneridae</taxon>
        <taxon>Pentapetalae</taxon>
        <taxon>rosids</taxon>
        <taxon>malvids</taxon>
        <taxon>Brassicales</taxon>
        <taxon>Brassicaceae</taxon>
        <taxon>Camelineae</taxon>
        <taxon>Arabidopsis</taxon>
    </lineage>
</organism>
<protein>
    <recommendedName>
        <fullName evidence="13">Photosystem I chlorophyll a/b-binding protein 2, chloroplastic</fullName>
        <shortName evidence="13">Lhca2</shortName>
    </recommendedName>
    <alternativeName>
        <fullName evidence="14">LHCI type III LHCA2</fullName>
    </alternativeName>
</protein>
<comment type="function">
    <text evidence="12">The light-harvesting complex (LHC) functions as a light receptor, it captures and delivers excitation energy to photosystems with which it is closely associated, here photosystem I.</text>
</comment>
<comment type="cofactor">
    <text evidence="7 9 10 11">Binds at least 14 chlorophylls (8 Chl-a and 6 Chl-b) and carotenoids such as lutein and neoxanthin.</text>
</comment>
<comment type="biophysicochemical properties">
    <absorption>
        <max>~695 nm</max>
        <text evidence="5">Emission maxima at 702 nm.</text>
    </absorption>
</comment>
<comment type="subunit">
    <text evidence="6 8 9 10 11">The LHC complex consists of chlorophyll a-b binding proteins (PubMed:19139095). Red-emitting heterodimers with LHCA3 and LHCA5 (PubMed:15356385, PubMed:17107674, PubMed:21083539). Binds to carotenoids (PubMed:17326666).</text>
</comment>
<comment type="subcellular location">
    <subcellularLocation>
        <location evidence="4">Plastid</location>
        <location evidence="4">Chloroplast thylakoid membrane</location>
        <topology evidence="3">Multi-pass membrane protein</topology>
    </subcellularLocation>
</comment>
<comment type="induction">
    <text evidence="6">Induced by low light (LL) but repressed by high light (HL). Inhibited by cold.</text>
</comment>
<comment type="domain">
    <text evidence="14">The N-terminus of the protein extends into the stroma where it is involved with adhesion of granal membranes and post-translational modifications; both are believed to mediate the distribution of excitation energy between photosystems I and II.</text>
</comment>
<comment type="PTM">
    <text evidence="2">Photoregulated by reversible phosphorylation of its threonine residues.</text>
</comment>
<comment type="disruption phenotype">
    <text evidence="5">Depletion of LHCA3 levels (at protein level).</text>
</comment>
<comment type="similarity">
    <text evidence="14">Belongs to the light-harvesting chlorophyll a/b-binding (LHC) protein family.</text>
</comment>
<reference key="1">
    <citation type="journal article" date="1999" name="Trends Plant Sci.">
        <title>A guide to the Lhc genes and their relatives in Arabidopsis.</title>
        <authorList>
            <person name="Jansson S."/>
        </authorList>
    </citation>
    <scope>NUCLEOTIDE SEQUENCE [MRNA]</scope>
    <scope>GENE FAMILY</scope>
    <scope>NOMENCLATURE</scope>
</reference>
<reference key="2">
    <citation type="journal article" date="2000" name="Nature">
        <title>Sequence and analysis of chromosome 3 of the plant Arabidopsis thaliana.</title>
        <authorList>
            <person name="Salanoubat M."/>
            <person name="Lemcke K."/>
            <person name="Rieger M."/>
            <person name="Ansorge W."/>
            <person name="Unseld M."/>
            <person name="Fartmann B."/>
            <person name="Valle G."/>
            <person name="Bloecker H."/>
            <person name="Perez-Alonso M."/>
            <person name="Obermaier B."/>
            <person name="Delseny M."/>
            <person name="Boutry M."/>
            <person name="Grivell L.A."/>
            <person name="Mache R."/>
            <person name="Puigdomenech P."/>
            <person name="De Simone V."/>
            <person name="Choisne N."/>
            <person name="Artiguenave F."/>
            <person name="Robert C."/>
            <person name="Brottier P."/>
            <person name="Wincker P."/>
            <person name="Cattolico L."/>
            <person name="Weissenbach J."/>
            <person name="Saurin W."/>
            <person name="Quetier F."/>
            <person name="Schaefer M."/>
            <person name="Mueller-Auer S."/>
            <person name="Gabel C."/>
            <person name="Fuchs M."/>
            <person name="Benes V."/>
            <person name="Wurmbach E."/>
            <person name="Drzonek H."/>
            <person name="Erfle H."/>
            <person name="Jordan N."/>
            <person name="Bangert S."/>
            <person name="Wiedelmann R."/>
            <person name="Kranz H."/>
            <person name="Voss H."/>
            <person name="Holland R."/>
            <person name="Brandt P."/>
            <person name="Nyakatura G."/>
            <person name="Vezzi A."/>
            <person name="D'Angelo M."/>
            <person name="Pallavicini A."/>
            <person name="Toppo S."/>
            <person name="Simionati B."/>
            <person name="Conrad A."/>
            <person name="Hornischer K."/>
            <person name="Kauer G."/>
            <person name="Loehnert T.-H."/>
            <person name="Nordsiek G."/>
            <person name="Reichelt J."/>
            <person name="Scharfe M."/>
            <person name="Schoen O."/>
            <person name="Bargues M."/>
            <person name="Terol J."/>
            <person name="Climent J."/>
            <person name="Navarro P."/>
            <person name="Collado C."/>
            <person name="Perez-Perez A."/>
            <person name="Ottenwaelder B."/>
            <person name="Duchemin D."/>
            <person name="Cooke R."/>
            <person name="Laudie M."/>
            <person name="Berger-Llauro C."/>
            <person name="Purnelle B."/>
            <person name="Masuy D."/>
            <person name="de Haan M."/>
            <person name="Maarse A.C."/>
            <person name="Alcaraz J.-P."/>
            <person name="Cottet A."/>
            <person name="Casacuberta E."/>
            <person name="Monfort A."/>
            <person name="Argiriou A."/>
            <person name="Flores M."/>
            <person name="Liguori R."/>
            <person name="Vitale D."/>
            <person name="Mannhaupt G."/>
            <person name="Haase D."/>
            <person name="Schoof H."/>
            <person name="Rudd S."/>
            <person name="Zaccaria P."/>
            <person name="Mewes H.-W."/>
            <person name="Mayer K.F.X."/>
            <person name="Kaul S."/>
            <person name="Town C.D."/>
            <person name="Koo H.L."/>
            <person name="Tallon L.J."/>
            <person name="Jenkins J."/>
            <person name="Rooney T."/>
            <person name="Rizzo M."/>
            <person name="Walts A."/>
            <person name="Utterback T."/>
            <person name="Fujii C.Y."/>
            <person name="Shea T.P."/>
            <person name="Creasy T.H."/>
            <person name="Haas B."/>
            <person name="Maiti R."/>
            <person name="Wu D."/>
            <person name="Peterson J."/>
            <person name="Van Aken S."/>
            <person name="Pai G."/>
            <person name="Militscher J."/>
            <person name="Sellers P."/>
            <person name="Gill J.E."/>
            <person name="Feldblyum T.V."/>
            <person name="Preuss D."/>
            <person name="Lin X."/>
            <person name="Nierman W.C."/>
            <person name="Salzberg S.L."/>
            <person name="White O."/>
            <person name="Venter J.C."/>
            <person name="Fraser C.M."/>
            <person name="Kaneko T."/>
            <person name="Nakamura Y."/>
            <person name="Sato S."/>
            <person name="Kato T."/>
            <person name="Asamizu E."/>
            <person name="Sasamoto S."/>
            <person name="Kimura T."/>
            <person name="Idesawa K."/>
            <person name="Kawashima K."/>
            <person name="Kishida Y."/>
            <person name="Kiyokawa C."/>
            <person name="Kohara M."/>
            <person name="Matsumoto M."/>
            <person name="Matsuno A."/>
            <person name="Muraki A."/>
            <person name="Nakayama S."/>
            <person name="Nakazaki N."/>
            <person name="Shinpo S."/>
            <person name="Takeuchi C."/>
            <person name="Wada T."/>
            <person name="Watanabe A."/>
            <person name="Yamada M."/>
            <person name="Yasuda M."/>
            <person name="Tabata S."/>
        </authorList>
    </citation>
    <scope>NUCLEOTIDE SEQUENCE [LARGE SCALE GENOMIC DNA]</scope>
    <source>
        <strain>cv. Columbia</strain>
    </source>
</reference>
<reference key="3">
    <citation type="journal article" date="2017" name="Plant J.">
        <title>Araport11: a complete reannotation of the Arabidopsis thaliana reference genome.</title>
        <authorList>
            <person name="Cheng C.Y."/>
            <person name="Krishnakumar V."/>
            <person name="Chan A.P."/>
            <person name="Thibaud-Nissen F."/>
            <person name="Schobel S."/>
            <person name="Town C.D."/>
        </authorList>
    </citation>
    <scope>GENOME REANNOTATION</scope>
    <source>
        <strain>cv. Columbia</strain>
    </source>
</reference>
<reference key="4">
    <citation type="journal article" date="2003" name="Science">
        <title>Empirical analysis of transcriptional activity in the Arabidopsis genome.</title>
        <authorList>
            <person name="Yamada K."/>
            <person name="Lim J."/>
            <person name="Dale J.M."/>
            <person name="Chen H."/>
            <person name="Shinn P."/>
            <person name="Palm C.J."/>
            <person name="Southwick A.M."/>
            <person name="Wu H.C."/>
            <person name="Kim C.J."/>
            <person name="Nguyen M."/>
            <person name="Pham P.K."/>
            <person name="Cheuk R.F."/>
            <person name="Karlin-Newmann G."/>
            <person name="Liu S.X."/>
            <person name="Lam B."/>
            <person name="Sakano H."/>
            <person name="Wu T."/>
            <person name="Yu G."/>
            <person name="Miranda M."/>
            <person name="Quach H.L."/>
            <person name="Tripp M."/>
            <person name="Chang C.H."/>
            <person name="Lee J.M."/>
            <person name="Toriumi M.J."/>
            <person name="Chan M.M."/>
            <person name="Tang C.C."/>
            <person name="Onodera C.S."/>
            <person name="Deng J.M."/>
            <person name="Akiyama K."/>
            <person name="Ansari Y."/>
            <person name="Arakawa T."/>
            <person name="Banh J."/>
            <person name="Banno F."/>
            <person name="Bowser L."/>
            <person name="Brooks S.Y."/>
            <person name="Carninci P."/>
            <person name="Chao Q."/>
            <person name="Choy N."/>
            <person name="Enju A."/>
            <person name="Goldsmith A.D."/>
            <person name="Gurjal M."/>
            <person name="Hansen N.F."/>
            <person name="Hayashizaki Y."/>
            <person name="Johnson-Hopson C."/>
            <person name="Hsuan V.W."/>
            <person name="Iida K."/>
            <person name="Karnes M."/>
            <person name="Khan S."/>
            <person name="Koesema E."/>
            <person name="Ishida J."/>
            <person name="Jiang P.X."/>
            <person name="Jones T."/>
            <person name="Kawai J."/>
            <person name="Kamiya A."/>
            <person name="Meyers C."/>
            <person name="Nakajima M."/>
            <person name="Narusaka M."/>
            <person name="Seki M."/>
            <person name="Sakurai T."/>
            <person name="Satou M."/>
            <person name="Tamse R."/>
            <person name="Vaysberg M."/>
            <person name="Wallender E.K."/>
            <person name="Wong C."/>
            <person name="Yamamura Y."/>
            <person name="Yuan S."/>
            <person name="Shinozaki K."/>
            <person name="Davis R.W."/>
            <person name="Theologis A."/>
            <person name="Ecker J.R."/>
        </authorList>
    </citation>
    <scope>NUCLEOTIDE SEQUENCE [LARGE SCALE MRNA]</scope>
    <source>
        <strain>cv. Columbia</strain>
    </source>
</reference>
<reference key="5">
    <citation type="journal article" date="2000" name="J. Biol. Chem.">
        <title>The PSI-K subunit of photosystem I is involved in the interaction between light-harvesting complex I and the photosystem I reaction center core.</title>
        <authorList>
            <person name="Jensen P.E."/>
            <person name="Gilpin M."/>
            <person name="Knoetzel J."/>
            <person name="Scheller H.V."/>
        </authorList>
    </citation>
    <scope>SUBCELLULAR LOCATION</scope>
    <source>
        <strain>cv. Columbia</strain>
    </source>
</reference>
<reference key="6">
    <citation type="journal article" date="2001" name="Plant Physiol.">
        <title>The properties of the chlorophyll a/b-binding proteins Lhca2 and Lhca3 studied in vivo using antisense inhibition.</title>
        <authorList>
            <person name="Ganeteg U."/>
            <person name="Strand A."/>
            <person name="Gustafsson P."/>
            <person name="Jansson S."/>
        </authorList>
    </citation>
    <scope>DISRUPTION PHENOTYPE</scope>
    <scope>BIOPHYSICOCHEMICAL PROPERTIES</scope>
    <source>
        <strain>cv. Columbia</strain>
    </source>
</reference>
<reference key="7">
    <citation type="journal article" date="2002" name="Biophys. J.">
        <title>Pigment organization and energy transfer dynamics in isolated photosystem I (PSI) complexes from Arabidopsis thaliana depleted of the PSI-G, PSI-K, PSI-L, or PSI-N subunit.</title>
        <authorList>
            <person name="Ihalainen J.A."/>
            <person name="Jensen P.E."/>
            <person name="Haldrup A."/>
            <person name="van Stokkum I.H.M."/>
            <person name="van Grondelle R."/>
            <person name="Scheller H.V."/>
            <person name="Dekker J.P."/>
        </authorList>
    </citation>
    <scope>REVIEW ON PHOTOSYSTEM I ANTENNA</scope>
</reference>
<reference key="8">
    <citation type="journal article" date="2004" name="Plant Mol. Biol.">
        <title>Lhca5--an LHC-type protein associated with photosystem I.</title>
        <authorList>
            <person name="Ganeteg U."/>
            <person name="Klimmek F."/>
            <person name="Jansson S."/>
        </authorList>
    </citation>
    <scope>INTERACTION WITH LHCA5</scope>
    <scope>INDUCTION BY LIGHT AND COLD</scope>
    <source>
        <strain>cv. C24</strain>
        <strain>cv. Columbia</strain>
    </source>
</reference>
<reference key="9">
    <citation type="journal article" date="2005" name="J. Biol. Chem.">
        <title>Pigment binding, fluorescence properties, and oligomerization behavior of Lhca5, a novel light-harvesting protein.</title>
        <authorList>
            <person name="Storf S."/>
            <person name="Jansson S."/>
            <person name="Schmid V.H.R."/>
        </authorList>
    </citation>
    <scope>COFACTOR</scope>
</reference>
<reference key="10">
    <citation type="journal article" date="2006" name="FEBS Lett.">
        <title>Lhca5 interaction with plant photosystem I.</title>
        <authorList>
            <person name="Lucinski R."/>
            <person name="Schmid V.H."/>
            <person name="Jansson S."/>
            <person name="Klimmek F."/>
        </authorList>
    </citation>
    <scope>INTERACTION WITH LHCA3 AND LHCA5</scope>
    <source>
        <strain>cv. Columbia</strain>
    </source>
</reference>
<reference key="11">
    <citation type="journal article" date="2007" name="Biochemistry">
        <title>Singlet and triplet state transitions of carotenoids in the antenna complexes of higher-plant photosystem I.</title>
        <authorList>
            <person name="Croce R."/>
            <person name="Mozzo M."/>
            <person name="Morosinotto T."/>
            <person name="Romeo A."/>
            <person name="Hienerwadel R."/>
            <person name="Bassi R."/>
        </authorList>
    </citation>
    <scope>INTERACTION WITH CAROTENOIDS</scope>
    <scope>COFACTOR</scope>
</reference>
<reference key="12">
    <citation type="journal article" date="2009" name="J. Biol. Chem.">
        <title>The role of Lhca complexes in the supramolecular organization of higher plant photosystem I.</title>
        <authorList>
            <person name="Wientjes E."/>
            <person name="Oostergetel G.T."/>
            <person name="Jansson S."/>
            <person name="Boekema E.J."/>
            <person name="Croce R."/>
        </authorList>
    </citation>
    <scope>COFACTOR</scope>
    <scope>SUBUNIT</scope>
</reference>
<reference key="13">
    <citation type="journal article" date="2011" name="Biochem. J.">
        <title>The light-harvesting complexes of higher-plant Photosystem I: Lhca1/4 and Lhca2/3 form two red-emitting heterodimers.</title>
        <authorList>
            <person name="Wientjes E."/>
            <person name="Croce R."/>
        </authorList>
    </citation>
    <scope>SUBUNIT</scope>
    <scope>COFACTOR</scope>
    <source>
        <strain>cv. Columbia</strain>
    </source>
</reference>
<reference key="14">
    <citation type="journal article" date="2011" name="Biophys. J.">
        <title>The role of the individual Lhcas in photosystem I excitation energy trapping.</title>
        <authorList>
            <person name="Wientjes E."/>
            <person name="van Stokkum I.H.M."/>
            <person name="van Amerongen H."/>
            <person name="Croce R."/>
        </authorList>
    </citation>
    <scope>FUNCTION</scope>
</reference>
<sequence>MASSLCASSAIAAISSPSFLGGKKLRLKKKLTVPAVSRPDASVRAVAADPDRPIWFPGSTPPEWLDGSLPGDFGFDPLGLSSDPDSLKWNVQAEIVHCRWAMLGAAGIFIPEFLTKIGILNTPSWYTAGEQEYFTDKTTLFVVELILIGWAEGRRWADIIKPGSVNTDPVFPNNKLTGTDVGYPGGLWFDPLGWGSGSPAKLKELRTKEIKNGRLAMLAVMGAWFQHIYTGTGPIDNLFAHLADPGHATIFAAFTPK</sequence>
<proteinExistence type="evidence at protein level"/>
<keyword id="KW-0002">3D-structure</keyword>
<keyword id="KW-0148">Chlorophyll</keyword>
<keyword id="KW-0150">Chloroplast</keyword>
<keyword id="KW-0157">Chromophore</keyword>
<keyword id="KW-0460">Magnesium</keyword>
<keyword id="KW-0472">Membrane</keyword>
<keyword id="KW-0479">Metal-binding</keyword>
<keyword id="KW-0602">Photosynthesis</keyword>
<keyword id="KW-0603">Photosystem I</keyword>
<keyword id="KW-0934">Plastid</keyword>
<keyword id="KW-1185">Reference proteome</keyword>
<keyword id="KW-0793">Thylakoid</keyword>
<keyword id="KW-0809">Transit peptide</keyword>
<keyword id="KW-0812">Transmembrane</keyword>
<keyword id="KW-1133">Transmembrane helix</keyword>
<feature type="transit peptide" description="Chloroplast" evidence="2">
    <location>
        <begin position="1"/>
        <end position="43"/>
    </location>
</feature>
<feature type="chain" id="PRO_0000435447" description="Photosystem I chlorophyll a/b-binding protein 2, chloroplastic">
    <location>
        <begin position="44"/>
        <end position="257"/>
    </location>
</feature>
<feature type="transmembrane region" description="Helical" evidence="3">
    <location>
        <begin position="100"/>
        <end position="120"/>
    </location>
</feature>
<feature type="transmembrane region" description="Helical" evidence="3">
    <location>
        <begin position="133"/>
        <end position="153"/>
    </location>
</feature>
<feature type="transmembrane region" description="Helical" evidence="3">
    <location>
        <begin position="215"/>
        <end position="235"/>
    </location>
</feature>
<feature type="binding site" description="axial binding residue" evidence="2">
    <location>
        <position position="55"/>
    </location>
    <ligand>
        <name>chlorophyll b</name>
        <dbReference type="ChEBI" id="CHEBI:61721"/>
        <label>1</label>
    </ligand>
    <ligandPart>
        <name>Mg</name>
        <dbReference type="ChEBI" id="CHEBI:25107"/>
    </ligandPart>
</feature>
<feature type="binding site" evidence="1">
    <location>
        <position position="75"/>
    </location>
    <ligand>
        <name>chlorophyll a</name>
        <dbReference type="ChEBI" id="CHEBI:58416"/>
        <label>1</label>
    </ligand>
</feature>
<feature type="binding site" evidence="1">
    <location>
        <position position="81"/>
    </location>
    <ligand>
        <name>chlorophyll a</name>
        <dbReference type="ChEBI" id="CHEBI:58416"/>
        <label>1</label>
    </ligand>
</feature>
<feature type="binding site" description="axial binding residue" evidence="2">
    <location>
        <position position="94"/>
    </location>
    <ligand>
        <name>chlorophyll a</name>
        <dbReference type="ChEBI" id="CHEBI:58416"/>
        <label>1</label>
    </ligand>
    <ligandPart>
        <name>Mg</name>
        <dbReference type="ChEBI" id="CHEBI:25107"/>
    </ligandPart>
</feature>
<feature type="binding site" evidence="1">
    <location>
        <position position="99"/>
    </location>
    <ligand>
        <name>chlorophyll b</name>
        <dbReference type="ChEBI" id="CHEBI:61721"/>
        <label>2</label>
    </ligand>
</feature>
<feature type="binding site" description="axial binding residue" evidence="2">
    <location>
        <position position="152"/>
    </location>
    <ligand>
        <name>chlorophyll b</name>
        <dbReference type="ChEBI" id="CHEBI:61721"/>
        <label>3</label>
    </ligand>
    <ligandPart>
        <name>Mg</name>
        <dbReference type="ChEBI" id="CHEBI:25107"/>
    </ligandPart>
</feature>
<feature type="binding site" evidence="1">
    <location>
        <position position="155"/>
    </location>
    <ligand>
        <name>chlorophyll b</name>
        <dbReference type="ChEBI" id="CHEBI:61721"/>
        <label>4</label>
    </ligand>
</feature>
<feature type="binding site" evidence="1">
    <location>
        <position position="208"/>
    </location>
    <ligand>
        <name>chlorophyll a</name>
        <dbReference type="ChEBI" id="CHEBI:58416"/>
        <label>5</label>
    </ligand>
</feature>
<feature type="binding site" description="axial binding residue" evidence="2">
    <location>
        <position position="209"/>
    </location>
    <ligand>
        <name>chlorophyll a</name>
        <dbReference type="ChEBI" id="CHEBI:58416"/>
        <label>3</label>
    </ligand>
    <ligandPart>
        <name>Mg</name>
        <dbReference type="ChEBI" id="CHEBI:25107"/>
    </ligandPart>
</feature>
<feature type="binding site" description="axial binding residue" evidence="2">
    <location>
        <position position="212"/>
    </location>
    <ligand>
        <name>chlorophyll a</name>
        <dbReference type="ChEBI" id="CHEBI:58416"/>
        <label>4</label>
    </ligand>
    <ligandPart>
        <name>Mg</name>
        <dbReference type="ChEBI" id="CHEBI:25107"/>
    </ligandPart>
</feature>
<feature type="binding site" evidence="1">
    <location>
        <position position="214"/>
    </location>
    <ligand>
        <name>chlorophyll a</name>
        <dbReference type="ChEBI" id="CHEBI:58416"/>
        <label>1</label>
    </ligand>
</feature>
<feature type="binding site" description="axial binding residue" evidence="2">
    <location>
        <position position="226"/>
    </location>
    <ligand>
        <name>chlorophyll a</name>
        <dbReference type="ChEBI" id="CHEBI:58416"/>
        <label>5</label>
    </ligand>
    <ligandPart>
        <name>Mg</name>
        <dbReference type="ChEBI" id="CHEBI:25107"/>
    </ligandPart>
</feature>
<feature type="binding site" description="axial binding residue" evidence="2">
    <location>
        <position position="241"/>
    </location>
    <ligand>
        <name>chlorophyll a</name>
        <dbReference type="ChEBI" id="CHEBI:58416"/>
        <label>6</label>
    </ligand>
    <ligandPart>
        <name>Mg</name>
        <dbReference type="ChEBI" id="CHEBI:25107"/>
    </ligandPart>
</feature>
<feature type="sequence conflict" description="In Ref. 2; CAB71077." evidence="14" ref="2">
    <original>P</original>
    <variation>Q</variation>
    <location>
        <position position="39"/>
    </location>
</feature>
<feature type="helix" evidence="18">
    <location>
        <begin position="84"/>
        <end position="116"/>
    </location>
</feature>
<feature type="turn" evidence="18">
    <location>
        <begin position="126"/>
        <end position="129"/>
    </location>
</feature>
<feature type="helix" evidence="18">
    <location>
        <begin position="137"/>
        <end position="160"/>
    </location>
</feature>
<feature type="helix" evidence="18">
    <location>
        <begin position="186"/>
        <end position="189"/>
    </location>
</feature>
<feature type="strand" evidence="19">
    <location>
        <begin position="191"/>
        <end position="193"/>
    </location>
</feature>
<feature type="helix" evidence="18">
    <location>
        <begin position="199"/>
        <end position="230"/>
    </location>
</feature>
<feature type="helix" evidence="18">
    <location>
        <begin position="234"/>
        <end position="243"/>
    </location>
</feature>
<feature type="turn" evidence="18">
    <location>
        <begin position="245"/>
        <end position="247"/>
    </location>
</feature>
<evidence type="ECO:0000250" key="1">
    <source>
        <dbReference type="UniProtKB" id="P07371"/>
    </source>
</evidence>
<evidence type="ECO:0000250" key="2">
    <source>
        <dbReference type="UniProtKB" id="P12333"/>
    </source>
</evidence>
<evidence type="ECO:0000255" key="3"/>
<evidence type="ECO:0000269" key="4">
    <source>
    </source>
</evidence>
<evidence type="ECO:0000269" key="5">
    <source>
    </source>
</evidence>
<evidence type="ECO:0000269" key="6">
    <source>
    </source>
</evidence>
<evidence type="ECO:0000269" key="7">
    <source>
    </source>
</evidence>
<evidence type="ECO:0000269" key="8">
    <source>
    </source>
</evidence>
<evidence type="ECO:0000269" key="9">
    <source>
    </source>
</evidence>
<evidence type="ECO:0000269" key="10">
    <source>
    </source>
</evidence>
<evidence type="ECO:0000269" key="11">
    <source>
    </source>
</evidence>
<evidence type="ECO:0000269" key="12">
    <source>
    </source>
</evidence>
<evidence type="ECO:0000303" key="13">
    <source>
    </source>
</evidence>
<evidence type="ECO:0000305" key="14"/>
<evidence type="ECO:0000312" key="15">
    <source>
        <dbReference type="Araport" id="AT3G61470"/>
    </source>
</evidence>
<evidence type="ECO:0000312" key="16">
    <source>
        <dbReference type="EMBL" id="AAD28767.1"/>
    </source>
</evidence>
<evidence type="ECO:0000312" key="17">
    <source>
        <dbReference type="EMBL" id="CAB71077.1"/>
    </source>
</evidence>
<evidence type="ECO:0007829" key="18">
    <source>
        <dbReference type="PDB" id="8J6Z"/>
    </source>
</evidence>
<evidence type="ECO:0007829" key="19">
    <source>
        <dbReference type="PDB" id="8J7A"/>
    </source>
</evidence>